<keyword id="KW-0028">Amino-acid biosynthesis</keyword>
<keyword id="KW-0057">Aromatic amino acid biosynthesis</keyword>
<keyword id="KW-0903">Direct protein sequencing</keyword>
<keyword id="KW-0456">Lyase</keyword>
<keyword id="KW-1185">Reference proteome</keyword>
<keyword id="KW-0704">Schiff base</keyword>
<feature type="chain" id="PRO_0000138794" description="3-dehydroquinate dehydratase">
    <location>
        <begin position="1"/>
        <end position="252"/>
    </location>
</feature>
<feature type="active site" description="Proton donor/acceptor" evidence="1 3">
    <location>
        <position position="143"/>
    </location>
</feature>
<feature type="active site" description="Schiff-base intermediate with substrate" evidence="1 4">
    <location>
        <position position="170"/>
    </location>
</feature>
<feature type="binding site" evidence="1">
    <location>
        <position position="21"/>
    </location>
    <ligand>
        <name>3-dehydroquinate</name>
        <dbReference type="ChEBI" id="CHEBI:32364"/>
    </ligand>
</feature>
<feature type="binding site" evidence="1">
    <location>
        <begin position="46"/>
        <end position="48"/>
    </location>
    <ligand>
        <name>3-dehydroquinate</name>
        <dbReference type="ChEBI" id="CHEBI:32364"/>
    </ligand>
</feature>
<feature type="binding site" evidence="1">
    <location>
        <position position="82"/>
    </location>
    <ligand>
        <name>3-dehydroquinate</name>
        <dbReference type="ChEBI" id="CHEBI:32364"/>
    </ligand>
</feature>
<feature type="binding site" evidence="1">
    <location>
        <position position="213"/>
    </location>
    <ligand>
        <name>3-dehydroquinate</name>
        <dbReference type="ChEBI" id="CHEBI:32364"/>
    </ligand>
</feature>
<feature type="binding site" evidence="1">
    <location>
        <position position="232"/>
    </location>
    <ligand>
        <name>3-dehydroquinate</name>
        <dbReference type="ChEBI" id="CHEBI:32364"/>
    </ligand>
</feature>
<feature type="binding site" evidence="1">
    <location>
        <position position="236"/>
    </location>
    <ligand>
        <name>3-dehydroquinate</name>
        <dbReference type="ChEBI" id="CHEBI:32364"/>
    </ligand>
</feature>
<feature type="mutagenesis site" description="Loss of dehydratase activity." evidence="7">
    <original>H</original>
    <variation>A</variation>
    <location>
        <position position="143"/>
    </location>
</feature>
<feature type="mutagenesis site" description="It retains full catalytic activity." evidence="7">
    <original>H</original>
    <variation>A</variation>
    <location>
        <position position="146"/>
    </location>
</feature>
<feature type="mutagenesis site" description="Loss of dehydratase activity, but it is still able to bind substrate." evidence="7">
    <original>K</original>
    <variation>A</variation>
    <location>
        <position position="170"/>
    </location>
</feature>
<feature type="mutagenesis site" description="It has little effect on the catalytic efficiency and affinity for 3-dehydroquinate." evidence="7">
    <original>M</original>
    <variation>L</variation>
    <location>
        <position position="205"/>
    </location>
</feature>
<organism>
    <name type="scientific">Escherichia coli (strain K12)</name>
    <dbReference type="NCBI Taxonomy" id="83333"/>
    <lineage>
        <taxon>Bacteria</taxon>
        <taxon>Pseudomonadati</taxon>
        <taxon>Pseudomonadota</taxon>
        <taxon>Gammaproteobacteria</taxon>
        <taxon>Enterobacterales</taxon>
        <taxon>Enterobacteriaceae</taxon>
        <taxon>Escherichia</taxon>
    </lineage>
</organism>
<name>AROD_ECOLI</name>
<gene>
    <name evidence="1 9" type="primary">aroD</name>
    <name type="ordered locus">b1693</name>
    <name type="ordered locus">JW1683</name>
</gene>
<proteinExistence type="evidence at protein level"/>
<sequence>MKTVTVKDLVIGTGAPKIIVSLMAKDIASVKSEALAYREADFDILEWRVDHYADLSNVESVMAAAKILRETMPEKPLLFTFRSAKEGGEQAISTEAYIALNRAAIDSGLVDMIDLELFTGDDQVKETVAYAHAHDVKVVMSNHDFHKTPEAEEIIARLRKMQSFDADIPKIALMPQSTSDVLTLLAATLEMQEQYADRPIITMSMAKTGVISRLAGEVFGSAATFGAVKKASAPGQISVNDLRTVLTILHQA</sequence>
<protein>
    <recommendedName>
        <fullName evidence="1 8">3-dehydroquinate dehydratase</fullName>
        <shortName evidence="1 9">3-dehydroquinase</shortName>
        <ecNumber evidence="1 5 7">4.2.1.10</ecNumber>
    </recommendedName>
    <alternativeName>
        <fullName evidence="1 8">Type I DHQase</fullName>
    </alternativeName>
    <alternativeName>
        <fullName evidence="1 8">Type I dehydroquinase</fullName>
        <shortName evidence="1">DHQ1</shortName>
    </alternativeName>
</protein>
<accession>P05194</accession>
<evidence type="ECO:0000255" key="1">
    <source>
        <dbReference type="HAMAP-Rule" id="MF_00214"/>
    </source>
</evidence>
<evidence type="ECO:0000269" key="2">
    <source>
    </source>
</evidence>
<evidence type="ECO:0000269" key="3">
    <source>
    </source>
</evidence>
<evidence type="ECO:0000269" key="4">
    <source>
    </source>
</evidence>
<evidence type="ECO:0000269" key="5">
    <source>
    </source>
</evidence>
<evidence type="ECO:0000269" key="6">
    <source>
    </source>
</evidence>
<evidence type="ECO:0000269" key="7">
    <source>
    </source>
</evidence>
<evidence type="ECO:0000303" key="8">
    <source>
    </source>
</evidence>
<evidence type="ECO:0000303" key="9">
    <source>
    </source>
</evidence>
<comment type="function">
    <text evidence="1 2 5 6 7">Involved in the third step of the chorismate pathway, which leads to the biosynthesis of aromatic amino acids (AroAA). Catalyzes the cis-dehydration of 3-dehydroquinate (DHQ) and introduces the first double bond of the aromatic ring to yield 3-dehydroshikimate. The reaction involves the formation of an imine intermediate between the keto group of 3-dehydroquinate and the epsilon-amino group of a Lys-170 at the active site.</text>
</comment>
<comment type="catalytic activity">
    <reaction evidence="1 5 7">
        <text>3-dehydroquinate = 3-dehydroshikimate + H2O</text>
        <dbReference type="Rhea" id="RHEA:21096"/>
        <dbReference type="ChEBI" id="CHEBI:15377"/>
        <dbReference type="ChEBI" id="CHEBI:16630"/>
        <dbReference type="ChEBI" id="CHEBI:32364"/>
        <dbReference type="EC" id="4.2.1.10"/>
    </reaction>
</comment>
<comment type="activity regulation">
    <text evidence="5">Inhibited by sodium borohydride.</text>
</comment>
<comment type="biophysicochemical properties">
    <kinetics>
        <KM evidence="7">17 uM for 3-dehydroquinate (at pH 7 and 25 degrees Celsius)</KM>
        <KM evidence="5">18 uM for 3-dehydroquinate (at pH 7 and 25 degrees Celsius)</KM>
        <text evidence="7">kcat is 142 sec(-1) for dehydratase activity with 3-dehydroquinate (at pH 7 and 25 degrees Celsius).</text>
    </kinetics>
</comment>
<comment type="pathway">
    <text evidence="1">Metabolic intermediate biosynthesis; chorismate biosynthesis; chorismate from D-erythrose 4-phosphate and phosphoenolpyruvate: step 3/7.</text>
</comment>
<comment type="subunit">
    <text evidence="1 5">Homodimer.</text>
</comment>
<comment type="mass spectrometry"/>
<comment type="similarity">
    <text evidence="1">Belongs to the type-I 3-dehydroquinase family.</text>
</comment>
<dbReference type="EC" id="4.2.1.10" evidence="1 5 7"/>
<dbReference type="EMBL" id="X59503">
    <property type="protein sequence ID" value="CAA42091.1"/>
    <property type="molecule type" value="Genomic_DNA"/>
</dbReference>
<dbReference type="EMBL" id="X04306">
    <property type="protein sequence ID" value="CAA27849.1"/>
    <property type="status" value="ALT_SEQ"/>
    <property type="molecule type" value="Genomic_DNA"/>
</dbReference>
<dbReference type="EMBL" id="U00096">
    <property type="protein sequence ID" value="AAC74763.1"/>
    <property type="molecule type" value="Genomic_DNA"/>
</dbReference>
<dbReference type="EMBL" id="AP009048">
    <property type="protein sequence ID" value="BAA15448.1"/>
    <property type="molecule type" value="Genomic_DNA"/>
</dbReference>
<dbReference type="PIR" id="S14750">
    <property type="entry name" value="DWECDQ"/>
</dbReference>
<dbReference type="RefSeq" id="NP_416208.1">
    <property type="nucleotide sequence ID" value="NC_000913.3"/>
</dbReference>
<dbReference type="RefSeq" id="WP_000860201.1">
    <property type="nucleotide sequence ID" value="NZ_LN832404.1"/>
</dbReference>
<dbReference type="SMR" id="P05194"/>
<dbReference type="BioGRID" id="4260289">
    <property type="interactions" value="6"/>
</dbReference>
<dbReference type="FunCoup" id="P05194">
    <property type="interactions" value="174"/>
</dbReference>
<dbReference type="IntAct" id="P05194">
    <property type="interactions" value="6"/>
</dbReference>
<dbReference type="STRING" id="511145.b1693"/>
<dbReference type="BindingDB" id="P05194"/>
<dbReference type="ChEMBL" id="CHEMBL4709"/>
<dbReference type="jPOST" id="P05194"/>
<dbReference type="PaxDb" id="511145-b1693"/>
<dbReference type="EnsemblBacteria" id="AAC74763">
    <property type="protein sequence ID" value="AAC74763"/>
    <property type="gene ID" value="b1693"/>
</dbReference>
<dbReference type="GeneID" id="946210"/>
<dbReference type="KEGG" id="ecj:JW1683"/>
<dbReference type="KEGG" id="eco:b1693"/>
<dbReference type="KEGG" id="ecoc:C3026_09695"/>
<dbReference type="PATRIC" id="fig|1411691.4.peg.565"/>
<dbReference type="EchoBASE" id="EB0074"/>
<dbReference type="eggNOG" id="COG0710">
    <property type="taxonomic scope" value="Bacteria"/>
</dbReference>
<dbReference type="HOGENOM" id="CLU_064444_0_0_6"/>
<dbReference type="InParanoid" id="P05194"/>
<dbReference type="OMA" id="ATMAMGE"/>
<dbReference type="OrthoDB" id="9813659at2"/>
<dbReference type="PhylomeDB" id="P05194"/>
<dbReference type="BioCyc" id="EcoCyc:AROD-MONOMER"/>
<dbReference type="BioCyc" id="MetaCyc:AROD-MONOMER"/>
<dbReference type="BRENDA" id="4.2.1.10">
    <property type="organism ID" value="2026"/>
</dbReference>
<dbReference type="SABIO-RK" id="P05194"/>
<dbReference type="UniPathway" id="UPA00053">
    <property type="reaction ID" value="UER00086"/>
</dbReference>
<dbReference type="PRO" id="PR:P05194"/>
<dbReference type="Proteomes" id="UP000000625">
    <property type="component" value="Chromosome"/>
</dbReference>
<dbReference type="GO" id="GO:0005829">
    <property type="term" value="C:cytosol"/>
    <property type="evidence" value="ECO:0000314"/>
    <property type="project" value="EcoCyc"/>
</dbReference>
<dbReference type="GO" id="GO:0003855">
    <property type="term" value="F:3-dehydroquinate dehydratase activity"/>
    <property type="evidence" value="ECO:0000314"/>
    <property type="project" value="UniProtKB"/>
</dbReference>
<dbReference type="GO" id="GO:0042803">
    <property type="term" value="F:protein homodimerization activity"/>
    <property type="evidence" value="ECO:0000314"/>
    <property type="project" value="EcoCyc"/>
</dbReference>
<dbReference type="GO" id="GO:0046279">
    <property type="term" value="P:3,4-dihydroxybenzoate biosynthetic process"/>
    <property type="evidence" value="ECO:0000314"/>
    <property type="project" value="UniProtKB"/>
</dbReference>
<dbReference type="GO" id="GO:0008652">
    <property type="term" value="P:amino acid biosynthetic process"/>
    <property type="evidence" value="ECO:0007669"/>
    <property type="project" value="UniProtKB-KW"/>
</dbReference>
<dbReference type="GO" id="GO:0009073">
    <property type="term" value="P:aromatic amino acid family biosynthetic process"/>
    <property type="evidence" value="ECO:0007669"/>
    <property type="project" value="UniProtKB-KW"/>
</dbReference>
<dbReference type="GO" id="GO:0009423">
    <property type="term" value="P:chorismate biosynthetic process"/>
    <property type="evidence" value="ECO:0007669"/>
    <property type="project" value="UniProtKB-UniRule"/>
</dbReference>
<dbReference type="CDD" id="cd00502">
    <property type="entry name" value="DHQase_I"/>
    <property type="match status" value="1"/>
</dbReference>
<dbReference type="FunFam" id="3.20.20.70:FF:000047">
    <property type="entry name" value="3-dehydroquinate dehydratase"/>
    <property type="match status" value="1"/>
</dbReference>
<dbReference type="Gene3D" id="3.20.20.70">
    <property type="entry name" value="Aldolase class I"/>
    <property type="match status" value="1"/>
</dbReference>
<dbReference type="HAMAP" id="MF_00214">
    <property type="entry name" value="AroD"/>
    <property type="match status" value="1"/>
</dbReference>
<dbReference type="InterPro" id="IPR018508">
    <property type="entry name" value="3-dehydroquinate_DH_AS"/>
</dbReference>
<dbReference type="InterPro" id="IPR013785">
    <property type="entry name" value="Aldolase_TIM"/>
</dbReference>
<dbReference type="InterPro" id="IPR001381">
    <property type="entry name" value="DHquinase_I"/>
</dbReference>
<dbReference type="InterPro" id="IPR050146">
    <property type="entry name" value="Type-I_3-dehydroquinase"/>
</dbReference>
<dbReference type="NCBIfam" id="TIGR01093">
    <property type="entry name" value="aroD"/>
    <property type="match status" value="1"/>
</dbReference>
<dbReference type="PANTHER" id="PTHR43699">
    <property type="entry name" value="3-DEHYDROQUINATE DEHYDRATASE"/>
    <property type="match status" value="1"/>
</dbReference>
<dbReference type="PANTHER" id="PTHR43699:SF1">
    <property type="entry name" value="3-DEHYDROQUINATE DEHYDRATASE"/>
    <property type="match status" value="1"/>
</dbReference>
<dbReference type="Pfam" id="PF01487">
    <property type="entry name" value="DHquinase_I"/>
    <property type="match status" value="1"/>
</dbReference>
<dbReference type="SUPFAM" id="SSF51569">
    <property type="entry name" value="Aldolase"/>
    <property type="match status" value="1"/>
</dbReference>
<dbReference type="PROSITE" id="PS01028">
    <property type="entry name" value="DEHYDROQUINASE_I"/>
    <property type="match status" value="1"/>
</dbReference>
<reference key="1">
    <citation type="journal article" date="1986" name="Biochem. J.">
        <title>The overexpression and complete amino acid sequence of Escherichia coli 3-dehydroquinase.</title>
        <authorList>
            <person name="Duncan K."/>
            <person name="Chaudhuri S."/>
            <person name="Campbell M.S."/>
            <person name="Coggins J.R."/>
        </authorList>
    </citation>
    <scope>NUCLEOTIDE SEQUENCE [GENOMIC DNA]</scope>
    <scope>PROTEIN SEQUENCE OF 1-20</scope>
    <scope>FUNCTION</scope>
</reference>
<reference key="2">
    <citation type="journal article" date="1991" name="Biochem. J.">
        <title>Identification of the active-site lysine residues of two biosynthetic 3-dehydroquinases.</title>
        <authorList>
            <person name="Chaudhuri S."/>
            <person name="Duncan K."/>
            <person name="Graham L.D."/>
            <person name="Coggins J.R."/>
        </authorList>
    </citation>
    <scope>PROTEIN SEQUENCE OF 162-172</scope>
    <scope>SEQUENCE REVISION</scope>
    <scope>ACTIVE SITE LYS-170</scope>
    <scope>REACTION MECHANISM</scope>
</reference>
<reference key="3">
    <citation type="journal article" date="1996" name="DNA Res.">
        <title>A 570-kb DNA sequence of the Escherichia coli K-12 genome corresponding to the 28.0-40.1 min region on the linkage map.</title>
        <authorList>
            <person name="Aiba H."/>
            <person name="Baba T."/>
            <person name="Fujita K."/>
            <person name="Hayashi K."/>
            <person name="Inada T."/>
            <person name="Isono K."/>
            <person name="Itoh T."/>
            <person name="Kasai H."/>
            <person name="Kashimoto K."/>
            <person name="Kimura S."/>
            <person name="Kitakawa M."/>
            <person name="Kitagawa M."/>
            <person name="Makino K."/>
            <person name="Miki T."/>
            <person name="Mizobuchi K."/>
            <person name="Mori H."/>
            <person name="Mori T."/>
            <person name="Motomura K."/>
            <person name="Nakade S."/>
            <person name="Nakamura Y."/>
            <person name="Nashimoto H."/>
            <person name="Nishio Y."/>
            <person name="Oshima T."/>
            <person name="Saito N."/>
            <person name="Sampei G."/>
            <person name="Seki Y."/>
            <person name="Sivasundaram S."/>
            <person name="Tagami H."/>
            <person name="Takeda J."/>
            <person name="Takemoto K."/>
            <person name="Takeuchi Y."/>
            <person name="Wada C."/>
            <person name="Yamamoto Y."/>
            <person name="Horiuchi T."/>
        </authorList>
    </citation>
    <scope>NUCLEOTIDE SEQUENCE [LARGE SCALE GENOMIC DNA]</scope>
    <source>
        <strain>K12 / W3110 / ATCC 27325 / DSM 5911</strain>
    </source>
</reference>
<reference key="4">
    <citation type="journal article" date="1997" name="Science">
        <title>The complete genome sequence of Escherichia coli K-12.</title>
        <authorList>
            <person name="Blattner F.R."/>
            <person name="Plunkett G. III"/>
            <person name="Bloch C.A."/>
            <person name="Perna N.T."/>
            <person name="Burland V."/>
            <person name="Riley M."/>
            <person name="Collado-Vides J."/>
            <person name="Glasner J.D."/>
            <person name="Rode C.K."/>
            <person name="Mayhew G.F."/>
            <person name="Gregor J."/>
            <person name="Davis N.W."/>
            <person name="Kirkpatrick H.A."/>
            <person name="Goeden M.A."/>
            <person name="Rose D.J."/>
            <person name="Mau B."/>
            <person name="Shao Y."/>
        </authorList>
    </citation>
    <scope>NUCLEOTIDE SEQUENCE [LARGE SCALE GENOMIC DNA]</scope>
    <source>
        <strain>K12 / MG1655 / ATCC 47076</strain>
    </source>
</reference>
<reference key="5">
    <citation type="journal article" date="2006" name="Mol. Syst. Biol.">
        <title>Highly accurate genome sequences of Escherichia coli K-12 strains MG1655 and W3110.</title>
        <authorList>
            <person name="Hayashi K."/>
            <person name="Morooka N."/>
            <person name="Yamamoto Y."/>
            <person name="Fujita K."/>
            <person name="Isono K."/>
            <person name="Choi S."/>
            <person name="Ohtsubo E."/>
            <person name="Baba T."/>
            <person name="Wanner B.L."/>
            <person name="Mori H."/>
            <person name="Horiuchi T."/>
        </authorList>
    </citation>
    <scope>NUCLEOTIDE SEQUENCE [LARGE SCALE GENOMIC DNA]</scope>
    <source>
        <strain>K12 / W3110 / ATCC 27325 / DSM 5911</strain>
    </source>
</reference>
<reference key="6">
    <citation type="journal article" date="1954" name="Biochim. Biophys. Acta">
        <title>Aromatic biosynthesis. XII. Conversion of 5-dehydroquinic acid to 5-dehydroshikimic acid dy 5-dehydroquinase.</title>
        <authorList>
            <person name="Mitsuhashi S."/>
            <person name="Davis B.D."/>
        </authorList>
    </citation>
    <scope>FUNCTION</scope>
</reference>
<reference key="7">
    <citation type="journal article" date="1986" name="Biochem. J.">
        <title>Purification and characterization of 3-dehydroquinase from Escherichia coli.</title>
        <authorList>
            <person name="Chaudhuri S."/>
            <person name="Lambert J.M."/>
            <person name="McColl L.A."/>
            <person name="Coggins J.R."/>
        </authorList>
    </citation>
    <scope>FUNCTION</scope>
    <scope>CATALYTIC ACTIVITY</scope>
    <scope>BIOPHYSICOCHEMICAL PROPERTIES</scope>
    <scope>ACTIVITY REGULATION</scope>
    <scope>SUBUNIT</scope>
</reference>
<reference key="8">
    <citation type="journal article" date="1992" name="J. Biol. Chem.">
        <title>Identification of the essential histidine residue at the active site of Escherichia coli dehydroquinase.</title>
        <authorList>
            <person name="Deka R.K."/>
            <person name="Kleanthous C."/>
            <person name="Coggins J.R."/>
        </authorList>
    </citation>
    <scope>ACTIVE SITE HIS-143</scope>
    <scope>PROTEIN SEQUENCE OF 141-158</scope>
</reference>
<reference key="9">
    <citation type="journal article" date="1995" name="J. Biol. Chem.">
        <title>Mutagenesis of active site residues in type I dehydroquinase from Escherichia coli. Stalled catalysis in a histidine to alanine mutant.</title>
        <authorList>
            <person name="Leech A.P."/>
            <person name="James R."/>
            <person name="Coggins J.R."/>
            <person name="Kleanthous C."/>
        </authorList>
    </citation>
    <scope>FUNCTION</scope>
    <scope>CATALYTIC ACTIVITY</scope>
    <scope>BIOPHYSICOCHEMICAL PROPERTIES</scope>
    <scope>MUTAGENESIS OF HIS-143; HIS-146; LYS-170 AND MET-205</scope>
    <scope>MASS SPECTROMETRY</scope>
    <scope>REACTION MECHANISM</scope>
</reference>